<keyword id="KW-0687">Ribonucleoprotein</keyword>
<keyword id="KW-0689">Ribosomal protein</keyword>
<keyword id="KW-0694">RNA-binding</keyword>
<keyword id="KW-0699">rRNA-binding</keyword>
<dbReference type="EMBL" id="CP001283">
    <property type="protein sequence ID" value="ACK88948.1"/>
    <property type="molecule type" value="Genomic_DNA"/>
</dbReference>
<dbReference type="RefSeq" id="WP_000615912.1">
    <property type="nucleotide sequence ID" value="NC_011773.1"/>
</dbReference>
<dbReference type="SMR" id="B7JKC9"/>
<dbReference type="GeneID" id="93010933"/>
<dbReference type="KEGG" id="bcu:BCAH820_0132"/>
<dbReference type="HOGENOM" id="CLU_095071_2_1_9"/>
<dbReference type="Proteomes" id="UP000001363">
    <property type="component" value="Chromosome"/>
</dbReference>
<dbReference type="GO" id="GO:0022625">
    <property type="term" value="C:cytosolic large ribosomal subunit"/>
    <property type="evidence" value="ECO:0007669"/>
    <property type="project" value="TreeGrafter"/>
</dbReference>
<dbReference type="GO" id="GO:0070180">
    <property type="term" value="F:large ribosomal subunit rRNA binding"/>
    <property type="evidence" value="ECO:0007669"/>
    <property type="project" value="TreeGrafter"/>
</dbReference>
<dbReference type="GO" id="GO:0003735">
    <property type="term" value="F:structural constituent of ribosome"/>
    <property type="evidence" value="ECO:0007669"/>
    <property type="project" value="InterPro"/>
</dbReference>
<dbReference type="GO" id="GO:0006412">
    <property type="term" value="P:translation"/>
    <property type="evidence" value="ECO:0007669"/>
    <property type="project" value="UniProtKB-UniRule"/>
</dbReference>
<dbReference type="CDD" id="cd00337">
    <property type="entry name" value="Ribosomal_uL14"/>
    <property type="match status" value="1"/>
</dbReference>
<dbReference type="FunFam" id="2.40.150.20:FF:000001">
    <property type="entry name" value="50S ribosomal protein L14"/>
    <property type="match status" value="1"/>
</dbReference>
<dbReference type="Gene3D" id="2.40.150.20">
    <property type="entry name" value="Ribosomal protein L14"/>
    <property type="match status" value="1"/>
</dbReference>
<dbReference type="HAMAP" id="MF_01367">
    <property type="entry name" value="Ribosomal_uL14"/>
    <property type="match status" value="1"/>
</dbReference>
<dbReference type="InterPro" id="IPR000218">
    <property type="entry name" value="Ribosomal_uL14"/>
</dbReference>
<dbReference type="InterPro" id="IPR005745">
    <property type="entry name" value="Ribosomal_uL14_bac-type"/>
</dbReference>
<dbReference type="InterPro" id="IPR019972">
    <property type="entry name" value="Ribosomal_uL14_CS"/>
</dbReference>
<dbReference type="InterPro" id="IPR036853">
    <property type="entry name" value="Ribosomal_uL14_sf"/>
</dbReference>
<dbReference type="NCBIfam" id="TIGR01067">
    <property type="entry name" value="rplN_bact"/>
    <property type="match status" value="1"/>
</dbReference>
<dbReference type="PANTHER" id="PTHR11761">
    <property type="entry name" value="50S/60S RIBOSOMAL PROTEIN L14/L23"/>
    <property type="match status" value="1"/>
</dbReference>
<dbReference type="PANTHER" id="PTHR11761:SF3">
    <property type="entry name" value="LARGE RIBOSOMAL SUBUNIT PROTEIN UL14M"/>
    <property type="match status" value="1"/>
</dbReference>
<dbReference type="Pfam" id="PF00238">
    <property type="entry name" value="Ribosomal_L14"/>
    <property type="match status" value="1"/>
</dbReference>
<dbReference type="SMART" id="SM01374">
    <property type="entry name" value="Ribosomal_L14"/>
    <property type="match status" value="1"/>
</dbReference>
<dbReference type="SUPFAM" id="SSF50193">
    <property type="entry name" value="Ribosomal protein L14"/>
    <property type="match status" value="1"/>
</dbReference>
<dbReference type="PROSITE" id="PS00049">
    <property type="entry name" value="RIBOSOMAL_L14"/>
    <property type="match status" value="1"/>
</dbReference>
<accession>B7JKC9</accession>
<name>RL14_BACC0</name>
<reference key="1">
    <citation type="submission" date="2008-10" db="EMBL/GenBank/DDBJ databases">
        <title>Genome sequence of Bacillus cereus AH820.</title>
        <authorList>
            <person name="Dodson R.J."/>
            <person name="Durkin A.S."/>
            <person name="Rosovitz M.J."/>
            <person name="Rasko D.A."/>
            <person name="Hoffmaster A."/>
            <person name="Ravel J."/>
            <person name="Sutton G."/>
        </authorList>
    </citation>
    <scope>NUCLEOTIDE SEQUENCE [LARGE SCALE GENOMIC DNA]</scope>
    <source>
        <strain>AH820</strain>
    </source>
</reference>
<proteinExistence type="inferred from homology"/>
<comment type="function">
    <text evidence="1">Binds to 23S rRNA. Forms part of two intersubunit bridges in the 70S ribosome.</text>
</comment>
<comment type="subunit">
    <text evidence="1">Part of the 50S ribosomal subunit. Forms a cluster with proteins L3 and L19. In the 70S ribosome, L14 and L19 interact and together make contacts with the 16S rRNA in bridges B5 and B8.</text>
</comment>
<comment type="similarity">
    <text evidence="1">Belongs to the universal ribosomal protein uL14 family.</text>
</comment>
<feature type="chain" id="PRO_1000144220" description="Large ribosomal subunit protein uL14">
    <location>
        <begin position="1"/>
        <end position="122"/>
    </location>
</feature>
<sequence>MIQQESRLKVADNSGARELLTIKVLGGSGRKYANIGDIIVATVKQATPGGVVKKGDVVKAVVVRTKSGARRPDGSYIKFDENAAVIIKDDKSPRGTRIFGPVARELRDSNFMKIVSLAPEVL</sequence>
<organism>
    <name type="scientific">Bacillus cereus (strain AH820)</name>
    <dbReference type="NCBI Taxonomy" id="405535"/>
    <lineage>
        <taxon>Bacteria</taxon>
        <taxon>Bacillati</taxon>
        <taxon>Bacillota</taxon>
        <taxon>Bacilli</taxon>
        <taxon>Bacillales</taxon>
        <taxon>Bacillaceae</taxon>
        <taxon>Bacillus</taxon>
        <taxon>Bacillus cereus group</taxon>
    </lineage>
</organism>
<evidence type="ECO:0000255" key="1">
    <source>
        <dbReference type="HAMAP-Rule" id="MF_01367"/>
    </source>
</evidence>
<evidence type="ECO:0000305" key="2"/>
<protein>
    <recommendedName>
        <fullName evidence="1">Large ribosomal subunit protein uL14</fullName>
    </recommendedName>
    <alternativeName>
        <fullName evidence="2">50S ribosomal protein L14</fullName>
    </alternativeName>
</protein>
<gene>
    <name evidence="1" type="primary">rplN</name>
    <name type="ordered locus">BCAH820_0132</name>
</gene>